<reference key="1">
    <citation type="submission" date="1997-01" db="EMBL/GenBank/DDBJ databases">
        <authorList>
            <person name="Ammar D.A."/>
            <person name="Kolakowski L.F. Jr."/>
            <person name="Eadie D.M."/>
            <person name="Wong D.J."/>
            <person name="Ma Y.Y."/>
            <person name="Yang-Feng T.L."/>
            <person name="Thompson D.A."/>
        </authorList>
    </citation>
    <scope>NUCLEOTIDE SEQUENCE [MRNA]</scope>
</reference>
<dbReference type="EMBL" id="U50144">
    <property type="protein sequence ID" value="AAB40600.1"/>
    <property type="molecule type" value="mRNA"/>
</dbReference>
<dbReference type="RefSeq" id="NP_776826.1">
    <property type="nucleotide sequence ID" value="NM_174401.2"/>
</dbReference>
<dbReference type="SMR" id="P79113"/>
<dbReference type="FunCoup" id="P79113">
    <property type="interactions" value="170"/>
</dbReference>
<dbReference type="STRING" id="9913.ENSBTAP00000022125"/>
<dbReference type="GlyCosmos" id="P79113">
    <property type="glycosylation" value="1 site, No reported glycans"/>
</dbReference>
<dbReference type="GlyGen" id="P79113">
    <property type="glycosylation" value="1 site"/>
</dbReference>
<dbReference type="PaxDb" id="9913-ENSBTAP00000022125"/>
<dbReference type="GeneID" id="281943"/>
<dbReference type="KEGG" id="bta:281943"/>
<dbReference type="CTD" id="4887"/>
<dbReference type="eggNOG" id="KOG3656">
    <property type="taxonomic scope" value="Eukaryota"/>
</dbReference>
<dbReference type="InParanoid" id="P79113"/>
<dbReference type="OrthoDB" id="9046662at2759"/>
<dbReference type="Proteomes" id="UP000009136">
    <property type="component" value="Unplaced"/>
</dbReference>
<dbReference type="GO" id="GO:0005886">
    <property type="term" value="C:plasma membrane"/>
    <property type="evidence" value="ECO:0007669"/>
    <property type="project" value="UniProtKB-SubCell"/>
</dbReference>
<dbReference type="GO" id="GO:0004983">
    <property type="term" value="F:neuropeptide Y receptor activity"/>
    <property type="evidence" value="ECO:0007669"/>
    <property type="project" value="InterPro"/>
</dbReference>
<dbReference type="CDD" id="cd15399">
    <property type="entry name" value="7tmA_NPY2R"/>
    <property type="match status" value="1"/>
</dbReference>
<dbReference type="FunFam" id="1.20.1070.10:FF:000158">
    <property type="entry name" value="Neuropeptide Y receptor type 2"/>
    <property type="match status" value="1"/>
</dbReference>
<dbReference type="Gene3D" id="1.20.1070.10">
    <property type="entry name" value="Rhodopsin 7-helix transmembrane proteins"/>
    <property type="match status" value="1"/>
</dbReference>
<dbReference type="InterPro" id="IPR000276">
    <property type="entry name" value="GPCR_Rhodpsn"/>
</dbReference>
<dbReference type="InterPro" id="IPR017452">
    <property type="entry name" value="GPCR_Rhodpsn_7TM"/>
</dbReference>
<dbReference type="InterPro" id="IPR001358">
    <property type="entry name" value="NPY2_rcpt"/>
</dbReference>
<dbReference type="InterPro" id="IPR000611">
    <property type="entry name" value="NPY_rcpt"/>
</dbReference>
<dbReference type="PANTHER" id="PTHR24235">
    <property type="entry name" value="NEUROPEPTIDE Y RECEPTOR"/>
    <property type="match status" value="1"/>
</dbReference>
<dbReference type="PANTHER" id="PTHR24235:SF20">
    <property type="entry name" value="NEUROPEPTIDE Y RECEPTOR TYPE 2"/>
    <property type="match status" value="1"/>
</dbReference>
<dbReference type="Pfam" id="PF00001">
    <property type="entry name" value="7tm_1"/>
    <property type="match status" value="1"/>
</dbReference>
<dbReference type="PRINTS" id="PR00237">
    <property type="entry name" value="GPCRRHODOPSN"/>
</dbReference>
<dbReference type="PRINTS" id="PR01014">
    <property type="entry name" value="NRPEPTIDEY2R"/>
</dbReference>
<dbReference type="PRINTS" id="PR01012">
    <property type="entry name" value="NRPEPTIDEYR"/>
</dbReference>
<dbReference type="SMART" id="SM01381">
    <property type="entry name" value="7TM_GPCR_Srsx"/>
    <property type="match status" value="1"/>
</dbReference>
<dbReference type="SUPFAM" id="SSF81321">
    <property type="entry name" value="Family A G protein-coupled receptor-like"/>
    <property type="match status" value="1"/>
</dbReference>
<dbReference type="PROSITE" id="PS00237">
    <property type="entry name" value="G_PROTEIN_RECEP_F1_1"/>
    <property type="match status" value="1"/>
</dbReference>
<dbReference type="PROSITE" id="PS50262">
    <property type="entry name" value="G_PROTEIN_RECEP_F1_2"/>
    <property type="match status" value="1"/>
</dbReference>
<gene>
    <name type="primary">NPY2R</name>
</gene>
<proteinExistence type="evidence at transcript level"/>
<organism>
    <name type="scientific">Bos taurus</name>
    <name type="common">Bovine</name>
    <dbReference type="NCBI Taxonomy" id="9913"/>
    <lineage>
        <taxon>Eukaryota</taxon>
        <taxon>Metazoa</taxon>
        <taxon>Chordata</taxon>
        <taxon>Craniata</taxon>
        <taxon>Vertebrata</taxon>
        <taxon>Euteleostomi</taxon>
        <taxon>Mammalia</taxon>
        <taxon>Eutheria</taxon>
        <taxon>Laurasiatheria</taxon>
        <taxon>Artiodactyla</taxon>
        <taxon>Ruminantia</taxon>
        <taxon>Pecora</taxon>
        <taxon>Bovidae</taxon>
        <taxon>Bovinae</taxon>
        <taxon>Bos</taxon>
    </lineage>
</organism>
<name>NPY2R_BOVIN</name>
<accession>P79113</accession>
<feature type="chain" id="PRO_0000069926" description="Neuropeptide Y receptor type 2">
    <location>
        <begin position="1"/>
        <end position="384"/>
    </location>
</feature>
<feature type="topological domain" description="Extracellular" evidence="1">
    <location>
        <begin position="1"/>
        <end position="54"/>
    </location>
</feature>
<feature type="transmembrane region" description="Helical; Name=1" evidence="1">
    <location>
        <begin position="55"/>
        <end position="75"/>
    </location>
</feature>
<feature type="topological domain" description="Cytoplasmic" evidence="1">
    <location>
        <begin position="76"/>
        <end position="89"/>
    </location>
</feature>
<feature type="transmembrane region" description="Helical; Name=2" evidence="1">
    <location>
        <begin position="90"/>
        <end position="110"/>
    </location>
</feature>
<feature type="topological domain" description="Extracellular" evidence="1">
    <location>
        <begin position="111"/>
        <end position="127"/>
    </location>
</feature>
<feature type="transmembrane region" description="Helical; Name=3" evidence="1">
    <location>
        <begin position="128"/>
        <end position="148"/>
    </location>
</feature>
<feature type="topological domain" description="Cytoplasmic" evidence="1">
    <location>
        <begin position="149"/>
        <end position="168"/>
    </location>
</feature>
<feature type="transmembrane region" description="Helical; Name=4" evidence="1">
    <location>
        <begin position="169"/>
        <end position="189"/>
    </location>
</feature>
<feature type="topological domain" description="Extracellular" evidence="1">
    <location>
        <begin position="190"/>
        <end position="219"/>
    </location>
</feature>
<feature type="transmembrane region" description="Helical; Name=5" evidence="1">
    <location>
        <begin position="220"/>
        <end position="240"/>
    </location>
</feature>
<feature type="topological domain" description="Cytoplasmic" evidence="1">
    <location>
        <begin position="241"/>
        <end position="271"/>
    </location>
</feature>
<feature type="transmembrane region" description="Helical; Name=6" evidence="1">
    <location>
        <begin position="272"/>
        <end position="292"/>
    </location>
</feature>
<feature type="topological domain" description="Extracellular" evidence="1">
    <location>
        <begin position="293"/>
        <end position="307"/>
    </location>
</feature>
<feature type="transmembrane region" description="Helical; Name=7" evidence="1">
    <location>
        <begin position="308"/>
        <end position="328"/>
    </location>
</feature>
<feature type="topological domain" description="Cytoplasmic" evidence="1">
    <location>
        <begin position="329"/>
        <end position="384"/>
    </location>
</feature>
<feature type="lipid moiety-binding region" description="S-palmitoyl cysteine" evidence="1">
    <location>
        <position position="345"/>
    </location>
</feature>
<feature type="glycosylation site" description="N-linked (GlcNAc...) asparagine" evidence="1">
    <location>
        <position position="13"/>
    </location>
</feature>
<feature type="disulfide bond" evidence="2">
    <location>
        <begin position="126"/>
        <end position="206"/>
    </location>
</feature>
<sequence length="384" mass="42943">MKMGPLGAEADENQTVEEMKVDQFGPGHTTLPGELAPDSEPELIDSTKLIEVQVVLILAYCSIILLGVIGNSLVIHVVIKFKSMRTVTNFFIANLAVADLLVNTLCLPFTLTYTLMGEWKMGPVLCHLVPYAQGLAVQVSTITLTVIALDRHRCIVYHLESKISKQISFLIIGLAWGVSALLASPLAIFREYSLIEIIPDFEIVACTEKWPGEEKGIYGTIYSLSSLLILYVLPLGIISFSYTRIWSKLKNHVSPGAAHDHYHQRRQKTTKMLVCVVVVFAVSWLPLHAFQLAVDIDSHVLDLKEYKLIFTVFHIIAMCSTFANPLLYGWMNSNYRKAFLSAFRCEQRLDAIHSEVSVTFKAKKHLQVTKNNGPNDSFTETTNV</sequence>
<keyword id="KW-1003">Cell membrane</keyword>
<keyword id="KW-1015">Disulfide bond</keyword>
<keyword id="KW-0297">G-protein coupled receptor</keyword>
<keyword id="KW-0325">Glycoprotein</keyword>
<keyword id="KW-0449">Lipoprotein</keyword>
<keyword id="KW-0472">Membrane</keyword>
<keyword id="KW-0564">Palmitate</keyword>
<keyword id="KW-0675">Receptor</keyword>
<keyword id="KW-1185">Reference proteome</keyword>
<keyword id="KW-0807">Transducer</keyword>
<keyword id="KW-0812">Transmembrane</keyword>
<keyword id="KW-1133">Transmembrane helix</keyword>
<comment type="function">
    <text>Receptor for neuropeptide Y and peptide YY.</text>
</comment>
<comment type="subcellular location">
    <subcellularLocation>
        <location>Cell membrane</location>
        <topology>Multi-pass membrane protein</topology>
    </subcellularLocation>
</comment>
<comment type="similarity">
    <text evidence="2">Belongs to the G-protein coupled receptor 1 family.</text>
</comment>
<protein>
    <recommendedName>
        <fullName>Neuropeptide Y receptor type 2</fullName>
        <shortName>NPY2-R</shortName>
    </recommendedName>
    <alternativeName>
        <fullName>NPY-Y2 receptor</fullName>
        <shortName>Y2 receptor</shortName>
    </alternativeName>
</protein>
<evidence type="ECO:0000255" key="1"/>
<evidence type="ECO:0000255" key="2">
    <source>
        <dbReference type="PROSITE-ProRule" id="PRU00521"/>
    </source>
</evidence>